<organism>
    <name type="scientific">Actinobacillus pleuropneumoniae serotype 7 (strain AP76)</name>
    <dbReference type="NCBI Taxonomy" id="537457"/>
    <lineage>
        <taxon>Bacteria</taxon>
        <taxon>Pseudomonadati</taxon>
        <taxon>Pseudomonadota</taxon>
        <taxon>Gammaproteobacteria</taxon>
        <taxon>Pasteurellales</taxon>
        <taxon>Pasteurellaceae</taxon>
        <taxon>Actinobacillus</taxon>
    </lineage>
</organism>
<feature type="chain" id="PRO_1000122681" description="Acyl-[acyl-carrier-protein]--UDP-N-acetylglucosamine O-acyltransferase">
    <location>
        <begin position="1"/>
        <end position="264"/>
    </location>
</feature>
<evidence type="ECO:0000255" key="1">
    <source>
        <dbReference type="HAMAP-Rule" id="MF_00387"/>
    </source>
</evidence>
<dbReference type="EC" id="2.3.1.129" evidence="1"/>
<dbReference type="EMBL" id="CP001091">
    <property type="protein sequence ID" value="ACE61083.1"/>
    <property type="molecule type" value="Genomic_DNA"/>
</dbReference>
<dbReference type="RefSeq" id="WP_005616848.1">
    <property type="nucleotide sequence ID" value="NC_010939.1"/>
</dbReference>
<dbReference type="SMR" id="B3H0S1"/>
<dbReference type="KEGG" id="apa:APP7_0431"/>
<dbReference type="HOGENOM" id="CLU_061249_0_0_6"/>
<dbReference type="UniPathway" id="UPA00359">
    <property type="reaction ID" value="UER00477"/>
</dbReference>
<dbReference type="Proteomes" id="UP000001226">
    <property type="component" value="Chromosome"/>
</dbReference>
<dbReference type="GO" id="GO:0005737">
    <property type="term" value="C:cytoplasm"/>
    <property type="evidence" value="ECO:0007669"/>
    <property type="project" value="UniProtKB-SubCell"/>
</dbReference>
<dbReference type="GO" id="GO:0016020">
    <property type="term" value="C:membrane"/>
    <property type="evidence" value="ECO:0007669"/>
    <property type="project" value="GOC"/>
</dbReference>
<dbReference type="GO" id="GO:0008780">
    <property type="term" value="F:acyl-[acyl-carrier-protein]-UDP-N-acetylglucosamine O-acyltransferase activity"/>
    <property type="evidence" value="ECO:0007669"/>
    <property type="project" value="UniProtKB-UniRule"/>
</dbReference>
<dbReference type="GO" id="GO:0009245">
    <property type="term" value="P:lipid A biosynthetic process"/>
    <property type="evidence" value="ECO:0007669"/>
    <property type="project" value="UniProtKB-UniRule"/>
</dbReference>
<dbReference type="CDD" id="cd03351">
    <property type="entry name" value="LbH_UDP-GlcNAc_AT"/>
    <property type="match status" value="1"/>
</dbReference>
<dbReference type="FunFam" id="2.160.10.10:FF:000003">
    <property type="entry name" value="Acyl-[acyl-carrier-protein]--UDP-N-acetylglucosamine O-acyltransferase"/>
    <property type="match status" value="1"/>
</dbReference>
<dbReference type="Gene3D" id="2.160.10.10">
    <property type="entry name" value="Hexapeptide repeat proteins"/>
    <property type="match status" value="1"/>
</dbReference>
<dbReference type="Gene3D" id="1.20.1180.10">
    <property type="entry name" value="Udp N-acetylglucosamine O-acyltransferase, C-terminal domain"/>
    <property type="match status" value="1"/>
</dbReference>
<dbReference type="HAMAP" id="MF_00387">
    <property type="entry name" value="LpxA"/>
    <property type="match status" value="1"/>
</dbReference>
<dbReference type="InterPro" id="IPR029098">
    <property type="entry name" value="Acetyltransf_C"/>
</dbReference>
<dbReference type="InterPro" id="IPR037157">
    <property type="entry name" value="Acetyltransf_C_sf"/>
</dbReference>
<dbReference type="InterPro" id="IPR001451">
    <property type="entry name" value="Hexapep"/>
</dbReference>
<dbReference type="InterPro" id="IPR018357">
    <property type="entry name" value="Hexapep_transf_CS"/>
</dbReference>
<dbReference type="InterPro" id="IPR010137">
    <property type="entry name" value="Lipid_A_LpxA"/>
</dbReference>
<dbReference type="InterPro" id="IPR011004">
    <property type="entry name" value="Trimer_LpxA-like_sf"/>
</dbReference>
<dbReference type="NCBIfam" id="TIGR01852">
    <property type="entry name" value="lipid_A_lpxA"/>
    <property type="match status" value="1"/>
</dbReference>
<dbReference type="NCBIfam" id="NF003657">
    <property type="entry name" value="PRK05289.1"/>
    <property type="match status" value="1"/>
</dbReference>
<dbReference type="PANTHER" id="PTHR43480">
    <property type="entry name" value="ACYL-[ACYL-CARRIER-PROTEIN]--UDP-N-ACETYLGLUCOSAMINE O-ACYLTRANSFERASE"/>
    <property type="match status" value="1"/>
</dbReference>
<dbReference type="PANTHER" id="PTHR43480:SF1">
    <property type="entry name" value="ACYL-[ACYL-CARRIER-PROTEIN]--UDP-N-ACETYLGLUCOSAMINE O-ACYLTRANSFERASE, MITOCHONDRIAL-RELATED"/>
    <property type="match status" value="1"/>
</dbReference>
<dbReference type="Pfam" id="PF13720">
    <property type="entry name" value="Acetyltransf_11"/>
    <property type="match status" value="1"/>
</dbReference>
<dbReference type="Pfam" id="PF00132">
    <property type="entry name" value="Hexapep"/>
    <property type="match status" value="1"/>
</dbReference>
<dbReference type="PIRSF" id="PIRSF000456">
    <property type="entry name" value="UDP-GlcNAc_acltr"/>
    <property type="match status" value="1"/>
</dbReference>
<dbReference type="SUPFAM" id="SSF51161">
    <property type="entry name" value="Trimeric LpxA-like enzymes"/>
    <property type="match status" value="1"/>
</dbReference>
<dbReference type="PROSITE" id="PS00101">
    <property type="entry name" value="HEXAPEP_TRANSFERASES"/>
    <property type="match status" value="1"/>
</dbReference>
<keyword id="KW-0012">Acyltransferase</keyword>
<keyword id="KW-0963">Cytoplasm</keyword>
<keyword id="KW-0441">Lipid A biosynthesis</keyword>
<keyword id="KW-0444">Lipid biosynthesis</keyword>
<keyword id="KW-0443">Lipid metabolism</keyword>
<keyword id="KW-0677">Repeat</keyword>
<keyword id="KW-0808">Transferase</keyword>
<proteinExistence type="inferred from homology"/>
<comment type="function">
    <text evidence="1">Involved in the biosynthesis of lipid A, a phosphorylated glycolipid that anchors the lipopolysaccharide to the outer membrane of the cell.</text>
</comment>
<comment type="catalytic activity">
    <reaction evidence="1">
        <text>a (3R)-hydroxyacyl-[ACP] + UDP-N-acetyl-alpha-D-glucosamine = a UDP-3-O-[(3R)-3-hydroxyacyl]-N-acetyl-alpha-D-glucosamine + holo-[ACP]</text>
        <dbReference type="Rhea" id="RHEA:67812"/>
        <dbReference type="Rhea" id="RHEA-COMP:9685"/>
        <dbReference type="Rhea" id="RHEA-COMP:9945"/>
        <dbReference type="ChEBI" id="CHEBI:57705"/>
        <dbReference type="ChEBI" id="CHEBI:64479"/>
        <dbReference type="ChEBI" id="CHEBI:78827"/>
        <dbReference type="ChEBI" id="CHEBI:173225"/>
        <dbReference type="EC" id="2.3.1.129"/>
    </reaction>
</comment>
<comment type="pathway">
    <text evidence="1">Glycolipid biosynthesis; lipid IV(A) biosynthesis; lipid IV(A) from (3R)-3-hydroxytetradecanoyl-[acyl-carrier-protein] and UDP-N-acetyl-alpha-D-glucosamine: step 1/6.</text>
</comment>
<comment type="subunit">
    <text evidence="1">Homotrimer.</text>
</comment>
<comment type="subcellular location">
    <subcellularLocation>
        <location evidence="1">Cytoplasm</location>
    </subcellularLocation>
</comment>
<comment type="similarity">
    <text evidence="1">Belongs to the transferase hexapeptide repeat family. LpxA subfamily.</text>
</comment>
<accession>B3H0S1</accession>
<gene>
    <name evidence="1" type="primary">lpxA</name>
    <name type="ordered locus">APP7_0431</name>
</gene>
<sequence>MRLIDSTAKISPLAVVEEGAQIGAHVEIGPFSVIGKNVKIGAKTIIHSHVVINGHTEIGEQNQIFQFASIGEINQDLKYQGEPTKVIIGNRNRIRESVTIHRGTVQGGGVTRIGNDNLFMINTHIAHDCSIGNRCIIANNGTLAGHVTLDDFVIVGGMSAIHQFVVIGSHVMLGGGSMVSQDVPPYVMAQGNHAQPFGVNLEGLKRRGFDKPAMHAIRNAYKLIYRSGKTIEEAIPEIEQFAVNEPAVQLFLDFFKRSTRGIIR</sequence>
<protein>
    <recommendedName>
        <fullName evidence="1">Acyl-[acyl-carrier-protein]--UDP-N-acetylglucosamine O-acyltransferase</fullName>
        <shortName evidence="1">UDP-N-acetylglucosamine acyltransferase</shortName>
        <ecNumber evidence="1">2.3.1.129</ecNumber>
    </recommendedName>
</protein>
<reference key="1">
    <citation type="submission" date="2008-06" db="EMBL/GenBank/DDBJ databases">
        <title>Genome and proteome analysis of A. pleuropneumoniae serotype 7.</title>
        <authorList>
            <person name="Linke B."/>
            <person name="Buettner F."/>
            <person name="Martinez-Arias R."/>
            <person name="Goesmann A."/>
            <person name="Baltes N."/>
            <person name="Tegetmeyer H."/>
            <person name="Singh M."/>
            <person name="Gerlach G.F."/>
        </authorList>
    </citation>
    <scope>NUCLEOTIDE SEQUENCE [LARGE SCALE GENOMIC DNA]</scope>
    <source>
        <strain>AP76</strain>
    </source>
</reference>
<name>LPXA_ACTP7</name>